<proteinExistence type="evidence at protein level"/>
<name>TSM1_ARATH</name>
<feature type="chain" id="PRO_0000165677" description="Tapetum-specific methyltransferase 1">
    <location>
        <begin position="1"/>
        <end position="233"/>
    </location>
</feature>
<feature type="binding site" evidence="1">
    <location>
        <position position="8"/>
    </location>
    <ligand>
        <name>substrate</name>
    </ligand>
</feature>
<feature type="binding site" evidence="2">
    <location>
        <position position="52"/>
    </location>
    <ligand>
        <name>S-adenosyl-L-methionine</name>
        <dbReference type="ChEBI" id="CHEBI:59789"/>
    </ligand>
</feature>
<feature type="binding site" evidence="2">
    <location>
        <position position="74"/>
    </location>
    <ligand>
        <name>S-adenosyl-L-methionine</name>
        <dbReference type="ChEBI" id="CHEBI:59789"/>
    </ligand>
</feature>
<feature type="binding site" evidence="2">
    <location>
        <begin position="76"/>
        <end position="77"/>
    </location>
    <ligand>
        <name>S-adenosyl-L-methionine</name>
        <dbReference type="ChEBI" id="CHEBI:59789"/>
    </ligand>
</feature>
<feature type="binding site" evidence="2">
    <location>
        <position position="82"/>
    </location>
    <ligand>
        <name>S-adenosyl-L-methionine</name>
        <dbReference type="ChEBI" id="CHEBI:59789"/>
    </ligand>
</feature>
<feature type="binding site" evidence="2">
    <location>
        <position position="100"/>
    </location>
    <ligand>
        <name>S-adenosyl-L-methionine</name>
        <dbReference type="ChEBI" id="CHEBI:59789"/>
    </ligand>
</feature>
<feature type="binding site" evidence="2">
    <location>
        <position position="129"/>
    </location>
    <ligand>
        <name>S-adenosyl-L-methionine</name>
        <dbReference type="ChEBI" id="CHEBI:59789"/>
    </ligand>
</feature>
<feature type="binding site" evidence="2">
    <location>
        <position position="150"/>
    </location>
    <ligand>
        <name>a divalent metal cation</name>
        <dbReference type="ChEBI" id="CHEBI:60240"/>
    </ligand>
</feature>
<feature type="binding site" evidence="1">
    <location>
        <position position="150"/>
    </location>
    <ligand>
        <name>substrate</name>
    </ligand>
</feature>
<feature type="binding site" evidence="2">
    <location>
        <position position="152"/>
    </location>
    <ligand>
        <name>S-adenosyl-L-methionine</name>
        <dbReference type="ChEBI" id="CHEBI:59789"/>
    </ligand>
</feature>
<feature type="binding site" evidence="2">
    <location>
        <position position="176"/>
    </location>
    <ligand>
        <name>a divalent metal cation</name>
        <dbReference type="ChEBI" id="CHEBI:60240"/>
    </ligand>
</feature>
<feature type="binding site" evidence="2">
    <location>
        <position position="177"/>
    </location>
    <ligand>
        <name>a divalent metal cation</name>
        <dbReference type="ChEBI" id="CHEBI:60240"/>
    </ligand>
</feature>
<gene>
    <name type="primary">TSM1</name>
    <name type="ordered locus">At1g67990</name>
    <name type="ORF">T23K23.16</name>
</gene>
<evidence type="ECO:0000250" key="1">
    <source>
        <dbReference type="UniProtKB" id="Q40313"/>
    </source>
</evidence>
<evidence type="ECO:0000255" key="2">
    <source>
        <dbReference type="PROSITE-ProRule" id="PRU01019"/>
    </source>
</evidence>
<evidence type="ECO:0000269" key="3">
    <source>
    </source>
</evidence>
<evidence type="ECO:0000269" key="4">
    <source>
    </source>
</evidence>
<evidence type="ECO:0000269" key="5">
    <source>
    </source>
</evidence>
<evidence type="ECO:0000269" key="6">
    <source>
    </source>
</evidence>
<evidence type="ECO:0000305" key="7"/>
<dbReference type="EC" id="2.1.1.-"/>
<dbReference type="EMBL" id="AC012563">
    <property type="protein sequence ID" value="AAG52012.1"/>
    <property type="status" value="ALT_SEQ"/>
    <property type="molecule type" value="Genomic_DNA"/>
</dbReference>
<dbReference type="EMBL" id="CP002684">
    <property type="protein sequence ID" value="AEE34733.1"/>
    <property type="molecule type" value="Genomic_DNA"/>
</dbReference>
<dbReference type="EMBL" id="BT026412">
    <property type="protein sequence ID" value="ABH04519.1"/>
    <property type="molecule type" value="mRNA"/>
</dbReference>
<dbReference type="EMBL" id="AY088274">
    <property type="protein sequence ID" value="AAM65814.1"/>
    <property type="molecule type" value="mRNA"/>
</dbReference>
<dbReference type="PIR" id="H96702">
    <property type="entry name" value="H96702"/>
</dbReference>
<dbReference type="RefSeq" id="NP_564917.1">
    <property type="nucleotide sequence ID" value="NM_105469.2"/>
</dbReference>
<dbReference type="SMR" id="Q9C9W4"/>
<dbReference type="FunCoup" id="Q9C9W4">
    <property type="interactions" value="557"/>
</dbReference>
<dbReference type="STRING" id="3702.Q9C9W4"/>
<dbReference type="PaxDb" id="3702-AT1G67990.1"/>
<dbReference type="EnsemblPlants" id="AT1G67990.1">
    <property type="protein sequence ID" value="AT1G67990.1"/>
    <property type="gene ID" value="AT1G67990"/>
</dbReference>
<dbReference type="GeneID" id="843127"/>
<dbReference type="Gramene" id="AT1G67990.1">
    <property type="protein sequence ID" value="AT1G67990.1"/>
    <property type="gene ID" value="AT1G67990"/>
</dbReference>
<dbReference type="KEGG" id="ath:AT1G67990"/>
<dbReference type="Araport" id="AT1G67990"/>
<dbReference type="TAIR" id="AT1G67990">
    <property type="gene designation" value="TSM1"/>
</dbReference>
<dbReference type="eggNOG" id="KOG1663">
    <property type="taxonomic scope" value="Eukaryota"/>
</dbReference>
<dbReference type="HOGENOM" id="CLU_067676_5_0_1"/>
<dbReference type="InParanoid" id="Q9C9W4"/>
<dbReference type="OMA" id="HMRAYRE"/>
<dbReference type="OrthoDB" id="10251242at2759"/>
<dbReference type="PhylomeDB" id="Q9C9W4"/>
<dbReference type="BioCyc" id="ARA:AT1G67990-MONOMER"/>
<dbReference type="BioCyc" id="MetaCyc:AT1G67990-MONOMER"/>
<dbReference type="UniPathway" id="UPA00711"/>
<dbReference type="PRO" id="PR:Q9C9W4"/>
<dbReference type="Proteomes" id="UP000006548">
    <property type="component" value="Chromosome 1"/>
</dbReference>
<dbReference type="ExpressionAtlas" id="Q9C9W4">
    <property type="expression patterns" value="baseline and differential"/>
</dbReference>
<dbReference type="GO" id="GO:0042409">
    <property type="term" value="F:caffeoyl-CoA O-methyltransferase activity"/>
    <property type="evidence" value="ECO:0000314"/>
    <property type="project" value="TAIR"/>
</dbReference>
<dbReference type="GO" id="GO:0046872">
    <property type="term" value="F:metal ion binding"/>
    <property type="evidence" value="ECO:0007669"/>
    <property type="project" value="UniProtKB-KW"/>
</dbReference>
<dbReference type="GO" id="GO:0080078">
    <property type="term" value="F:tricaffeoyl spermidine:S-adenosyl-L-methionine O-methyltransferase activity"/>
    <property type="evidence" value="ECO:0000314"/>
    <property type="project" value="TAIR"/>
</dbReference>
<dbReference type="GO" id="GO:0080012">
    <property type="term" value="F:trihydroxyferuloyl spermidine O-methyltransferase activity"/>
    <property type="evidence" value="ECO:0000314"/>
    <property type="project" value="TAIR"/>
</dbReference>
<dbReference type="GO" id="GO:0080077">
    <property type="term" value="F:trihydroxyferuloyl spermidine:S-adenosyl-L-methionine O-methyltransferase activity"/>
    <property type="evidence" value="ECO:0000314"/>
    <property type="project" value="TAIR"/>
</dbReference>
<dbReference type="GO" id="GO:0009809">
    <property type="term" value="P:lignin biosynthetic process"/>
    <property type="evidence" value="ECO:0007669"/>
    <property type="project" value="UniProtKB-KW"/>
</dbReference>
<dbReference type="GO" id="GO:0032259">
    <property type="term" value="P:methylation"/>
    <property type="evidence" value="ECO:0007669"/>
    <property type="project" value="UniProtKB-KW"/>
</dbReference>
<dbReference type="GO" id="GO:0048316">
    <property type="term" value="P:seed development"/>
    <property type="evidence" value="ECO:0000315"/>
    <property type="project" value="TAIR"/>
</dbReference>
<dbReference type="GO" id="GO:0080088">
    <property type="term" value="P:spermidine hydroxycinnamate conjugate biosynthetic process"/>
    <property type="evidence" value="ECO:0000314"/>
    <property type="project" value="TAIR"/>
</dbReference>
<dbReference type="CDD" id="cd02440">
    <property type="entry name" value="AdoMet_MTases"/>
    <property type="match status" value="1"/>
</dbReference>
<dbReference type="Gene3D" id="3.40.50.150">
    <property type="entry name" value="Vaccinia Virus protein VP39"/>
    <property type="match status" value="1"/>
</dbReference>
<dbReference type="InterPro" id="IPR050362">
    <property type="entry name" value="Cation-dep_OMT"/>
</dbReference>
<dbReference type="InterPro" id="IPR029063">
    <property type="entry name" value="SAM-dependent_MTases_sf"/>
</dbReference>
<dbReference type="InterPro" id="IPR002935">
    <property type="entry name" value="SAM_O-MeTrfase"/>
</dbReference>
<dbReference type="PANTHER" id="PTHR10509">
    <property type="entry name" value="O-METHYLTRANSFERASE-RELATED"/>
    <property type="match status" value="1"/>
</dbReference>
<dbReference type="PANTHER" id="PTHR10509:SF34">
    <property type="entry name" value="TAPETUM-SPECIFIC METHYLTRANSFERASE 1"/>
    <property type="match status" value="1"/>
</dbReference>
<dbReference type="Pfam" id="PF01596">
    <property type="entry name" value="Methyltransf_3"/>
    <property type="match status" value="1"/>
</dbReference>
<dbReference type="SUPFAM" id="SSF53335">
    <property type="entry name" value="S-adenosyl-L-methionine-dependent methyltransferases"/>
    <property type="match status" value="1"/>
</dbReference>
<dbReference type="PROSITE" id="PS51682">
    <property type="entry name" value="SAM_OMT_I"/>
    <property type="match status" value="1"/>
</dbReference>
<comment type="function">
    <text evidence="3 4 5">Methyltransferase involved in phenylpropanoid polyamine conjugate biosynthesis. In vivo, methylates only one of the 5-hydroxyferuloyl moieties of N1,N5,N10-tri-(hydroxyferuloyl)-spermidine, while is able in vitro to convert all three 5-hydroxyferuloyl residues to the corresponding sinapoyl moieties and to methylate caffeoyl CoA and tricaffeoyl spermidine.</text>
</comment>
<comment type="cofactor">
    <cofactor evidence="1">
        <name>a divalent metal cation</name>
        <dbReference type="ChEBI" id="CHEBI:60240"/>
    </cofactor>
    <text evidence="1">Binds 1 divalent metal cation per subunit.</text>
</comment>
<comment type="biophysicochemical properties">
    <kinetics>
        <KM evidence="3">73.3 uM for caffeic acid (for the recombinant enzyme)</KM>
        <KM evidence="3">15.5 uM for quercetin (for the recombinant enzyme)</KM>
        <KM evidence="3">13.5 uM for caffeoyl CoA (for the recombinant enzyme)</KM>
        <KM evidence="3">19.6 uM for caffeoyl glucose (for the recombinant enzyme)</KM>
        <KM evidence="3">14.6 uM for chlorogenic acid (for the recombinant enzyme)</KM>
        <text evidence="3">kcat is 0.0029 sec(-1) with caffeic acid as substrate. kcat is 0.0025 sec(-1) with quercetin as substrate. kcat is 0.0141 sec(-1) with caffeoyl CoA as substrate. kcat is 0.0239 sec(-1) with caffeoyl glucose as substrate. kcat is 0.0301 sec(-1) with chlorogenic acid as substrate.</text>
    </kinetics>
</comment>
<comment type="pathway">
    <text>Aromatic compound metabolism; phenylpropanoid biosynthesis.</text>
</comment>
<comment type="tissue specificity">
    <text evidence="3 5">Expressed in inflorescences and flower buds. Not detected in roots, leaves or stems. Located exclusively in the tapetum of developing stamen.</text>
</comment>
<comment type="developmental stage">
    <text evidence="6">Expressed only in early stages of flower development.</text>
</comment>
<comment type="similarity">
    <text evidence="2">Belongs to the class I-like SAM-binding methyltransferase superfamily. Cation-dependent O-methyltransferase family. CCoAMT subfamily.</text>
</comment>
<comment type="sequence caution" evidence="7">
    <conflict type="erroneous gene model prediction">
        <sequence resource="EMBL-CDS" id="AAG52012"/>
    </conflict>
</comment>
<sequence>MDGRLPDKGILKSEALKQYIMETTAYPREHELLKELREATIQRYGNLSEMGVPVDESLFLSMLVKIINAKNTIEIGVFTGYSLFTVALALPEDGRITAIDIDQAGYNLGLEFMKKAGVDHKINFIQSDAVRGLDQLLNGEKQEYDFAFVDADKTNYVYFLEKLLKLVKVGGIIAFDNTLWFGTLIQKENEVPGHMRAYREALLEFNKILARDPRVEIAQISIGDGLTLCRRLI</sequence>
<organism>
    <name type="scientific">Arabidopsis thaliana</name>
    <name type="common">Mouse-ear cress</name>
    <dbReference type="NCBI Taxonomy" id="3702"/>
    <lineage>
        <taxon>Eukaryota</taxon>
        <taxon>Viridiplantae</taxon>
        <taxon>Streptophyta</taxon>
        <taxon>Embryophyta</taxon>
        <taxon>Tracheophyta</taxon>
        <taxon>Spermatophyta</taxon>
        <taxon>Magnoliopsida</taxon>
        <taxon>eudicotyledons</taxon>
        <taxon>Gunneridae</taxon>
        <taxon>Pentapetalae</taxon>
        <taxon>rosids</taxon>
        <taxon>malvids</taxon>
        <taxon>Brassicales</taxon>
        <taxon>Brassicaceae</taxon>
        <taxon>Camelineae</taxon>
        <taxon>Arabidopsis</taxon>
    </lineage>
</organism>
<keyword id="KW-0438">Lignin biosynthesis</keyword>
<keyword id="KW-0479">Metal-binding</keyword>
<keyword id="KW-0489">Methyltransferase</keyword>
<keyword id="KW-1185">Reference proteome</keyword>
<keyword id="KW-0949">S-adenosyl-L-methionine</keyword>
<keyword id="KW-0808">Transferase</keyword>
<reference key="1">
    <citation type="journal article" date="2000" name="Nature">
        <title>Sequence and analysis of chromosome 1 of the plant Arabidopsis thaliana.</title>
        <authorList>
            <person name="Theologis A."/>
            <person name="Ecker J.R."/>
            <person name="Palm C.J."/>
            <person name="Federspiel N.A."/>
            <person name="Kaul S."/>
            <person name="White O."/>
            <person name="Alonso J."/>
            <person name="Altafi H."/>
            <person name="Araujo R."/>
            <person name="Bowman C.L."/>
            <person name="Brooks S.Y."/>
            <person name="Buehler E."/>
            <person name="Chan A."/>
            <person name="Chao Q."/>
            <person name="Chen H."/>
            <person name="Cheuk R.F."/>
            <person name="Chin C.W."/>
            <person name="Chung M.K."/>
            <person name="Conn L."/>
            <person name="Conway A.B."/>
            <person name="Conway A.R."/>
            <person name="Creasy T.H."/>
            <person name="Dewar K."/>
            <person name="Dunn P."/>
            <person name="Etgu P."/>
            <person name="Feldblyum T.V."/>
            <person name="Feng J.-D."/>
            <person name="Fong B."/>
            <person name="Fujii C.Y."/>
            <person name="Gill J.E."/>
            <person name="Goldsmith A.D."/>
            <person name="Haas B."/>
            <person name="Hansen N.F."/>
            <person name="Hughes B."/>
            <person name="Huizar L."/>
            <person name="Hunter J.L."/>
            <person name="Jenkins J."/>
            <person name="Johnson-Hopson C."/>
            <person name="Khan S."/>
            <person name="Khaykin E."/>
            <person name="Kim C.J."/>
            <person name="Koo H.L."/>
            <person name="Kremenetskaia I."/>
            <person name="Kurtz D.B."/>
            <person name="Kwan A."/>
            <person name="Lam B."/>
            <person name="Langin-Hooper S."/>
            <person name="Lee A."/>
            <person name="Lee J.M."/>
            <person name="Lenz C.A."/>
            <person name="Li J.H."/>
            <person name="Li Y.-P."/>
            <person name="Lin X."/>
            <person name="Liu S.X."/>
            <person name="Liu Z.A."/>
            <person name="Luros J.S."/>
            <person name="Maiti R."/>
            <person name="Marziali A."/>
            <person name="Militscher J."/>
            <person name="Miranda M."/>
            <person name="Nguyen M."/>
            <person name="Nierman W.C."/>
            <person name="Osborne B.I."/>
            <person name="Pai G."/>
            <person name="Peterson J."/>
            <person name="Pham P.K."/>
            <person name="Rizzo M."/>
            <person name="Rooney T."/>
            <person name="Rowley D."/>
            <person name="Sakano H."/>
            <person name="Salzberg S.L."/>
            <person name="Schwartz J.R."/>
            <person name="Shinn P."/>
            <person name="Southwick A.M."/>
            <person name="Sun H."/>
            <person name="Tallon L.J."/>
            <person name="Tambunga G."/>
            <person name="Toriumi M.J."/>
            <person name="Town C.D."/>
            <person name="Utterback T."/>
            <person name="Van Aken S."/>
            <person name="Vaysberg M."/>
            <person name="Vysotskaia V.S."/>
            <person name="Walker M."/>
            <person name="Wu D."/>
            <person name="Yu G."/>
            <person name="Fraser C.M."/>
            <person name="Venter J.C."/>
            <person name="Davis R.W."/>
        </authorList>
    </citation>
    <scope>NUCLEOTIDE SEQUENCE [LARGE SCALE GENOMIC DNA]</scope>
    <source>
        <strain>cv. Columbia</strain>
    </source>
</reference>
<reference key="2">
    <citation type="journal article" date="2017" name="Plant J.">
        <title>Araport11: a complete reannotation of the Arabidopsis thaliana reference genome.</title>
        <authorList>
            <person name="Cheng C.Y."/>
            <person name="Krishnakumar V."/>
            <person name="Chan A.P."/>
            <person name="Thibaud-Nissen F."/>
            <person name="Schobel S."/>
            <person name="Town C.D."/>
        </authorList>
    </citation>
    <scope>GENOME REANNOTATION</scope>
    <source>
        <strain>cv. Columbia</strain>
    </source>
</reference>
<reference key="3">
    <citation type="submission" date="2006-08" db="EMBL/GenBank/DDBJ databases">
        <title>Arabidopsis ORF clones.</title>
        <authorList>
            <person name="Quinitio C."/>
            <person name="Chen H."/>
            <person name="Kim C.J."/>
            <person name="Shinn P."/>
            <person name="Ecker J.R."/>
        </authorList>
    </citation>
    <scope>NUCLEOTIDE SEQUENCE [LARGE SCALE MRNA]</scope>
    <source>
        <strain>cv. Columbia</strain>
    </source>
</reference>
<reference key="4">
    <citation type="submission" date="2002-03" db="EMBL/GenBank/DDBJ databases">
        <title>Full-length cDNA from Arabidopsis thaliana.</title>
        <authorList>
            <person name="Brover V.V."/>
            <person name="Troukhan M.E."/>
            <person name="Alexandrov N.A."/>
            <person name="Lu Y.-P."/>
            <person name="Flavell R.B."/>
            <person name="Feldmann K.A."/>
        </authorList>
    </citation>
    <scope>NUCLEOTIDE SEQUENCE [LARGE SCALE MRNA]</scope>
</reference>
<reference key="5">
    <citation type="journal article" date="2008" name="Plant J.">
        <title>Tapetum-specific location of a cation-dependent O-methyltransferase in Arabidopsis thaliana.</title>
        <authorList>
            <person name="Fellenberg C."/>
            <person name="Milkowski C."/>
            <person name="Hause B."/>
            <person name="Lange P.R."/>
            <person name="Boettcher C."/>
            <person name="Schmidt J."/>
            <person name="Vogt T."/>
        </authorList>
    </citation>
    <scope>FUNCTION</scope>
    <scope>CATALYTIC ACTIVITY</scope>
    <scope>TISSUE SPECIFICITY</scope>
    <scope>BIOPHYSICOCHEMICAL PROPERTIES</scope>
</reference>
<reference key="6">
    <citation type="journal article" date="2009" name="Plant J.">
        <title>A BAHD acyltransferase is expressed in the tapetum of Arabidopsis anthers and is involved in the synthesis of hydroxycinnamoyl spermidines.</title>
        <authorList>
            <person name="Grienenberger E."/>
            <person name="Besseau S."/>
            <person name="Geoffroy P."/>
            <person name="Debayle D."/>
            <person name="Heintz D."/>
            <person name="Lapierre C."/>
            <person name="Pollet B."/>
            <person name="Heitz T."/>
            <person name="Legrand M."/>
        </authorList>
    </citation>
    <scope>FUNCTION</scope>
    <scope>CATALYTIC ACTIVITY</scope>
</reference>
<reference key="7">
    <citation type="journal article" date="2009" name="Phytochemistry">
        <title>Phenylpropanoid polyamine conjugate biosynthesis in Arabidopsis thaliana flower buds.</title>
        <authorList>
            <person name="Fellenberg C."/>
            <person name="Boettcher C."/>
            <person name="Vogt T."/>
        </authorList>
    </citation>
    <scope>FUNCTION</scope>
    <scope>TISSUE SPECIFICITY</scope>
</reference>
<reference key="8">
    <citation type="journal article" date="2011" name="Anal. Biochem.">
        <title>Arabidopsis methyltransferase fingerprints by affinity-based protein profiling.</title>
        <authorList>
            <person name="Wirsing L."/>
            <person name="Naumann K."/>
            <person name="Vogt T."/>
        </authorList>
    </citation>
    <scope>IDENTIFICATION BY MASS SPECTROMETRY</scope>
    <scope>DEVELOPMENTAL STAGE</scope>
</reference>
<accession>Q9C9W4</accession>
<accession>Q0V808</accession>
<accession>Q8L5T6</accession>
<protein>
    <recommendedName>
        <fullName>Tapetum-specific methyltransferase 1</fullName>
        <shortName>AtTSM1</shortName>
        <ecNumber>2.1.1.-</ecNumber>
    </recommendedName>
    <alternativeName>
        <fullName>Trans-caffeoyl-CoA 3-O-methyltransferase</fullName>
        <shortName>CCoAMT</shortName>
        <shortName>CCoAOMT</shortName>
    </alternativeName>
</protein>